<reference key="1">
    <citation type="journal article" date="1997" name="Nature">
        <title>Genomic sequence of a Lyme disease spirochaete, Borrelia burgdorferi.</title>
        <authorList>
            <person name="Fraser C.M."/>
            <person name="Casjens S."/>
            <person name="Huang W.M."/>
            <person name="Sutton G.G."/>
            <person name="Clayton R.A."/>
            <person name="Lathigra R."/>
            <person name="White O."/>
            <person name="Ketchum K.A."/>
            <person name="Dodson R.J."/>
            <person name="Hickey E.K."/>
            <person name="Gwinn M.L."/>
            <person name="Dougherty B.A."/>
            <person name="Tomb J.-F."/>
            <person name="Fleischmann R.D."/>
            <person name="Richardson D.L."/>
            <person name="Peterson J.D."/>
            <person name="Kerlavage A.R."/>
            <person name="Quackenbush J."/>
            <person name="Salzberg S.L."/>
            <person name="Hanson M."/>
            <person name="van Vugt R."/>
            <person name="Palmer N."/>
            <person name="Adams M.D."/>
            <person name="Gocayne J.D."/>
            <person name="Weidman J.F."/>
            <person name="Utterback T.R."/>
            <person name="Watthey L."/>
            <person name="McDonald L.A."/>
            <person name="Artiach P."/>
            <person name="Bowman C."/>
            <person name="Garland S.A."/>
            <person name="Fujii C."/>
            <person name="Cotton M.D."/>
            <person name="Horst K."/>
            <person name="Roberts K.M."/>
            <person name="Hatch B."/>
            <person name="Smith H.O."/>
            <person name="Venter J.C."/>
        </authorList>
    </citation>
    <scope>NUCLEOTIDE SEQUENCE [LARGE SCALE GENOMIC DNA]</scope>
    <source>
        <strain>ATCC 35210 / DSM 4680 / CIP 102532 / B31</strain>
    </source>
</reference>
<accession>O51088</accession>
<sequence>MAISLTEEDFVVKVFDYKNDKEWSFRGDRPAIIDFYANWCGPCKMLSPIFEKLSKKYENSIDFYKVDTDKEQDISSAIGVQSLPTILFIPVDGKPKVSVGFLQEDAFENIIKDFFGF</sequence>
<evidence type="ECO:0000255" key="1">
    <source>
        <dbReference type="PROSITE-ProRule" id="PRU00691"/>
    </source>
</evidence>
<evidence type="ECO:0000305" key="2"/>
<proteinExistence type="inferred from homology"/>
<gene>
    <name type="primary">trxA</name>
    <name type="ordered locus">BB_0061</name>
</gene>
<keyword id="KW-1015">Disulfide bond</keyword>
<keyword id="KW-0249">Electron transport</keyword>
<keyword id="KW-0676">Redox-active center</keyword>
<keyword id="KW-1185">Reference proteome</keyword>
<keyword id="KW-0813">Transport</keyword>
<protein>
    <recommendedName>
        <fullName>Thioredoxin</fullName>
        <shortName>Trx</shortName>
    </recommendedName>
</protein>
<comment type="function">
    <text>Participates in various redox reactions through the reversible oxidation of its active center dithiol to a disulfide and catalyzes dithiol-disulfide exchange reactions.</text>
</comment>
<comment type="similarity">
    <text evidence="2">Belongs to the thioredoxin family.</text>
</comment>
<dbReference type="EMBL" id="AE000783">
    <property type="protein sequence ID" value="AAC66447.1"/>
    <property type="molecule type" value="Genomic_DNA"/>
</dbReference>
<dbReference type="PIR" id="E70107">
    <property type="entry name" value="E70107"/>
</dbReference>
<dbReference type="RefSeq" id="NP_212195.1">
    <property type="nucleotide sequence ID" value="NC_001318.1"/>
</dbReference>
<dbReference type="RefSeq" id="WP_010889671.1">
    <property type="nucleotide sequence ID" value="NC_001318.1"/>
</dbReference>
<dbReference type="SMR" id="O51088"/>
<dbReference type="STRING" id="224326.BB_0061"/>
<dbReference type="PaxDb" id="224326-BB_0061"/>
<dbReference type="EnsemblBacteria" id="AAC66447">
    <property type="protein sequence ID" value="AAC66447"/>
    <property type="gene ID" value="BB_0061"/>
</dbReference>
<dbReference type="KEGG" id="bbu:BB_0061"/>
<dbReference type="PATRIC" id="fig|224326.49.peg.459"/>
<dbReference type="HOGENOM" id="CLU_090389_2_2_12"/>
<dbReference type="OrthoDB" id="9790390at2"/>
<dbReference type="Proteomes" id="UP000001807">
    <property type="component" value="Chromosome"/>
</dbReference>
<dbReference type="GO" id="GO:0005829">
    <property type="term" value="C:cytosol"/>
    <property type="evidence" value="ECO:0000314"/>
    <property type="project" value="CAFA"/>
</dbReference>
<dbReference type="GO" id="GO:0015035">
    <property type="term" value="F:protein-disulfide reductase activity"/>
    <property type="evidence" value="ECO:0007669"/>
    <property type="project" value="InterPro"/>
</dbReference>
<dbReference type="CDD" id="cd02947">
    <property type="entry name" value="TRX_family"/>
    <property type="match status" value="1"/>
</dbReference>
<dbReference type="FunFam" id="3.40.30.10:FF:000229">
    <property type="entry name" value="Thioredoxin (TRX)"/>
    <property type="match status" value="1"/>
</dbReference>
<dbReference type="Gene3D" id="3.40.30.10">
    <property type="entry name" value="Glutaredoxin"/>
    <property type="match status" value="1"/>
</dbReference>
<dbReference type="InterPro" id="IPR005746">
    <property type="entry name" value="Thioredoxin"/>
</dbReference>
<dbReference type="InterPro" id="IPR036249">
    <property type="entry name" value="Thioredoxin-like_sf"/>
</dbReference>
<dbReference type="InterPro" id="IPR017937">
    <property type="entry name" value="Thioredoxin_CS"/>
</dbReference>
<dbReference type="InterPro" id="IPR013766">
    <property type="entry name" value="Thioredoxin_domain"/>
</dbReference>
<dbReference type="NCBIfam" id="TIGR01068">
    <property type="entry name" value="thioredoxin"/>
    <property type="match status" value="1"/>
</dbReference>
<dbReference type="PANTHER" id="PTHR45663">
    <property type="entry name" value="GEO12009P1"/>
    <property type="match status" value="1"/>
</dbReference>
<dbReference type="PANTHER" id="PTHR45663:SF11">
    <property type="entry name" value="GEO12009P1"/>
    <property type="match status" value="1"/>
</dbReference>
<dbReference type="Pfam" id="PF00085">
    <property type="entry name" value="Thioredoxin"/>
    <property type="match status" value="1"/>
</dbReference>
<dbReference type="PRINTS" id="PR00421">
    <property type="entry name" value="THIOREDOXIN"/>
</dbReference>
<dbReference type="SUPFAM" id="SSF52833">
    <property type="entry name" value="Thioredoxin-like"/>
    <property type="match status" value="1"/>
</dbReference>
<dbReference type="PROSITE" id="PS00194">
    <property type="entry name" value="THIOREDOXIN_1"/>
    <property type="match status" value="1"/>
</dbReference>
<dbReference type="PROSITE" id="PS51352">
    <property type="entry name" value="THIOREDOXIN_2"/>
    <property type="match status" value="1"/>
</dbReference>
<organism>
    <name type="scientific">Borreliella burgdorferi (strain ATCC 35210 / DSM 4680 / CIP 102532 / B31)</name>
    <name type="common">Borrelia burgdorferi</name>
    <dbReference type="NCBI Taxonomy" id="224326"/>
    <lineage>
        <taxon>Bacteria</taxon>
        <taxon>Pseudomonadati</taxon>
        <taxon>Spirochaetota</taxon>
        <taxon>Spirochaetia</taxon>
        <taxon>Spirochaetales</taxon>
        <taxon>Borreliaceae</taxon>
        <taxon>Borreliella</taxon>
    </lineage>
</organism>
<feature type="chain" id="PRO_0000120077" description="Thioredoxin">
    <location>
        <begin position="1"/>
        <end position="117"/>
    </location>
</feature>
<feature type="domain" description="Thioredoxin" evidence="1">
    <location>
        <begin position="2"/>
        <end position="116"/>
    </location>
</feature>
<feature type="disulfide bond" description="Redox-active" evidence="1">
    <location>
        <begin position="40"/>
        <end position="43"/>
    </location>
</feature>
<name>THIO_BORBU</name>